<protein>
    <recommendedName>
        <fullName evidence="1">L-threonine 3-dehydrogenase</fullName>
        <shortName evidence="1">TDH</shortName>
        <ecNumber evidence="1">1.1.1.103</ecNumber>
    </recommendedName>
</protein>
<name>TDH_ECO81</name>
<keyword id="KW-0963">Cytoplasm</keyword>
<keyword id="KW-0479">Metal-binding</keyword>
<keyword id="KW-0520">NAD</keyword>
<keyword id="KW-0560">Oxidoreductase</keyword>
<keyword id="KW-0862">Zinc</keyword>
<proteinExistence type="inferred from homology"/>
<organism>
    <name type="scientific">Escherichia coli O81 (strain ED1a)</name>
    <dbReference type="NCBI Taxonomy" id="585397"/>
    <lineage>
        <taxon>Bacteria</taxon>
        <taxon>Pseudomonadati</taxon>
        <taxon>Pseudomonadota</taxon>
        <taxon>Gammaproteobacteria</taxon>
        <taxon>Enterobacterales</taxon>
        <taxon>Enterobacteriaceae</taxon>
        <taxon>Escherichia</taxon>
    </lineage>
</organism>
<sequence length="341" mass="37285">MKALSKLKAEEGIWMTDVPVPELGHNDLLIKIRKTAICGTDVHIYNWDEWSQKTIPVPMVVGHEYVGEVVGIGQEVKGFKIGDRVSGEGHITCGHCRNCRGGRTHLCRNTIGVGVNRPGCFAEYLVIPAFNAFKIPDNISDDLASIFDPFGNAVHTALSFDLVGEDVLVSGAGPIGIMAAAVAKHVGARNVVITDVNEYRLELARKMGITRAVNVAKENLNDVMTELGMTEGFDVGLEMSGAPPAFRTMLDTMNHGGRIAMLGIPPSDMSIDWTKVIFKGLFIKGIYGREMFETWYKMAALIQSGLDLSPIITHRFSIDDFQKGFDAMRSGQSGKVILSWD</sequence>
<evidence type="ECO:0000255" key="1">
    <source>
        <dbReference type="HAMAP-Rule" id="MF_00627"/>
    </source>
</evidence>
<dbReference type="EC" id="1.1.1.103" evidence="1"/>
<dbReference type="EMBL" id="CU928162">
    <property type="protein sequence ID" value="CAR10290.1"/>
    <property type="molecule type" value="Genomic_DNA"/>
</dbReference>
<dbReference type="RefSeq" id="WP_000646018.1">
    <property type="nucleotide sequence ID" value="NC_011745.1"/>
</dbReference>
<dbReference type="SMR" id="B7N1S0"/>
<dbReference type="KEGG" id="ecq:ECED1_4302"/>
<dbReference type="HOGENOM" id="CLU_026673_11_0_6"/>
<dbReference type="UniPathway" id="UPA00046">
    <property type="reaction ID" value="UER00505"/>
</dbReference>
<dbReference type="Proteomes" id="UP000000748">
    <property type="component" value="Chromosome"/>
</dbReference>
<dbReference type="GO" id="GO:0005737">
    <property type="term" value="C:cytoplasm"/>
    <property type="evidence" value="ECO:0007669"/>
    <property type="project" value="UniProtKB-SubCell"/>
</dbReference>
<dbReference type="GO" id="GO:0008743">
    <property type="term" value="F:L-threonine 3-dehydrogenase activity"/>
    <property type="evidence" value="ECO:0007669"/>
    <property type="project" value="UniProtKB-UniRule"/>
</dbReference>
<dbReference type="GO" id="GO:0008270">
    <property type="term" value="F:zinc ion binding"/>
    <property type="evidence" value="ECO:0007669"/>
    <property type="project" value="UniProtKB-UniRule"/>
</dbReference>
<dbReference type="GO" id="GO:0019518">
    <property type="term" value="P:L-threonine catabolic process to glycine"/>
    <property type="evidence" value="ECO:0007669"/>
    <property type="project" value="UniProtKB-UniPathway"/>
</dbReference>
<dbReference type="FunFam" id="3.40.50.720:FF:000059">
    <property type="entry name" value="L-threonine 3-dehydrogenase"/>
    <property type="match status" value="1"/>
</dbReference>
<dbReference type="Gene3D" id="3.90.180.10">
    <property type="entry name" value="Medium-chain alcohol dehydrogenases, catalytic domain"/>
    <property type="match status" value="1"/>
</dbReference>
<dbReference type="Gene3D" id="3.40.50.720">
    <property type="entry name" value="NAD(P)-binding Rossmann-like Domain"/>
    <property type="match status" value="1"/>
</dbReference>
<dbReference type="HAMAP" id="MF_00627">
    <property type="entry name" value="Thr_dehydrog"/>
    <property type="match status" value="1"/>
</dbReference>
<dbReference type="InterPro" id="IPR013149">
    <property type="entry name" value="ADH-like_C"/>
</dbReference>
<dbReference type="InterPro" id="IPR013154">
    <property type="entry name" value="ADH-like_N"/>
</dbReference>
<dbReference type="InterPro" id="IPR002328">
    <property type="entry name" value="ADH_Zn_CS"/>
</dbReference>
<dbReference type="InterPro" id="IPR011032">
    <property type="entry name" value="GroES-like_sf"/>
</dbReference>
<dbReference type="InterPro" id="IPR004627">
    <property type="entry name" value="L-Threonine_3-DHase"/>
</dbReference>
<dbReference type="InterPro" id="IPR036291">
    <property type="entry name" value="NAD(P)-bd_dom_sf"/>
</dbReference>
<dbReference type="InterPro" id="IPR020843">
    <property type="entry name" value="PKS_ER"/>
</dbReference>
<dbReference type="InterPro" id="IPR050129">
    <property type="entry name" value="Zn_alcohol_dh"/>
</dbReference>
<dbReference type="NCBIfam" id="NF003808">
    <property type="entry name" value="PRK05396.1"/>
    <property type="match status" value="1"/>
</dbReference>
<dbReference type="NCBIfam" id="TIGR00692">
    <property type="entry name" value="tdh"/>
    <property type="match status" value="1"/>
</dbReference>
<dbReference type="PANTHER" id="PTHR43401">
    <property type="entry name" value="L-THREONINE 3-DEHYDROGENASE"/>
    <property type="match status" value="1"/>
</dbReference>
<dbReference type="PANTHER" id="PTHR43401:SF2">
    <property type="entry name" value="L-THREONINE 3-DEHYDROGENASE"/>
    <property type="match status" value="1"/>
</dbReference>
<dbReference type="Pfam" id="PF08240">
    <property type="entry name" value="ADH_N"/>
    <property type="match status" value="1"/>
</dbReference>
<dbReference type="Pfam" id="PF00107">
    <property type="entry name" value="ADH_zinc_N"/>
    <property type="match status" value="1"/>
</dbReference>
<dbReference type="SMART" id="SM00829">
    <property type="entry name" value="PKS_ER"/>
    <property type="match status" value="1"/>
</dbReference>
<dbReference type="SUPFAM" id="SSF50129">
    <property type="entry name" value="GroES-like"/>
    <property type="match status" value="1"/>
</dbReference>
<dbReference type="SUPFAM" id="SSF51735">
    <property type="entry name" value="NAD(P)-binding Rossmann-fold domains"/>
    <property type="match status" value="1"/>
</dbReference>
<dbReference type="PROSITE" id="PS00059">
    <property type="entry name" value="ADH_ZINC"/>
    <property type="match status" value="1"/>
</dbReference>
<comment type="function">
    <text evidence="1">Catalyzes the NAD(+)-dependent oxidation of L-threonine to 2-amino-3-ketobutyrate.</text>
</comment>
<comment type="catalytic activity">
    <reaction evidence="1">
        <text>L-threonine + NAD(+) = (2S)-2-amino-3-oxobutanoate + NADH + H(+)</text>
        <dbReference type="Rhea" id="RHEA:13161"/>
        <dbReference type="ChEBI" id="CHEBI:15378"/>
        <dbReference type="ChEBI" id="CHEBI:57540"/>
        <dbReference type="ChEBI" id="CHEBI:57926"/>
        <dbReference type="ChEBI" id="CHEBI:57945"/>
        <dbReference type="ChEBI" id="CHEBI:78948"/>
        <dbReference type="EC" id="1.1.1.103"/>
    </reaction>
</comment>
<comment type="cofactor">
    <cofactor evidence="1">
        <name>Zn(2+)</name>
        <dbReference type="ChEBI" id="CHEBI:29105"/>
    </cofactor>
    <text evidence="1">Binds 2 Zn(2+) ions per subunit.</text>
</comment>
<comment type="pathway">
    <text evidence="1">Amino-acid degradation; L-threonine degradation via oxydo-reductase pathway; glycine from L-threonine: step 1/2.</text>
</comment>
<comment type="subunit">
    <text evidence="1">Homotetramer.</text>
</comment>
<comment type="subcellular location">
    <subcellularLocation>
        <location evidence="1">Cytoplasm</location>
    </subcellularLocation>
</comment>
<comment type="similarity">
    <text evidence="1">Belongs to the zinc-containing alcohol dehydrogenase family.</text>
</comment>
<reference key="1">
    <citation type="journal article" date="2009" name="PLoS Genet.">
        <title>Organised genome dynamics in the Escherichia coli species results in highly diverse adaptive paths.</title>
        <authorList>
            <person name="Touchon M."/>
            <person name="Hoede C."/>
            <person name="Tenaillon O."/>
            <person name="Barbe V."/>
            <person name="Baeriswyl S."/>
            <person name="Bidet P."/>
            <person name="Bingen E."/>
            <person name="Bonacorsi S."/>
            <person name="Bouchier C."/>
            <person name="Bouvet O."/>
            <person name="Calteau A."/>
            <person name="Chiapello H."/>
            <person name="Clermont O."/>
            <person name="Cruveiller S."/>
            <person name="Danchin A."/>
            <person name="Diard M."/>
            <person name="Dossat C."/>
            <person name="Karoui M.E."/>
            <person name="Frapy E."/>
            <person name="Garry L."/>
            <person name="Ghigo J.M."/>
            <person name="Gilles A.M."/>
            <person name="Johnson J."/>
            <person name="Le Bouguenec C."/>
            <person name="Lescat M."/>
            <person name="Mangenot S."/>
            <person name="Martinez-Jehanne V."/>
            <person name="Matic I."/>
            <person name="Nassif X."/>
            <person name="Oztas S."/>
            <person name="Petit M.A."/>
            <person name="Pichon C."/>
            <person name="Rouy Z."/>
            <person name="Ruf C.S."/>
            <person name="Schneider D."/>
            <person name="Tourret J."/>
            <person name="Vacherie B."/>
            <person name="Vallenet D."/>
            <person name="Medigue C."/>
            <person name="Rocha E.P.C."/>
            <person name="Denamur E."/>
        </authorList>
    </citation>
    <scope>NUCLEOTIDE SEQUENCE [LARGE SCALE GENOMIC DNA]</scope>
    <source>
        <strain>ED1a</strain>
    </source>
</reference>
<accession>B7N1S0</accession>
<feature type="chain" id="PRO_1000147261" description="L-threonine 3-dehydrogenase">
    <location>
        <begin position="1"/>
        <end position="341"/>
    </location>
</feature>
<feature type="active site" description="Charge relay system" evidence="1">
    <location>
        <position position="40"/>
    </location>
</feature>
<feature type="active site" description="Charge relay system" evidence="1">
    <location>
        <position position="43"/>
    </location>
</feature>
<feature type="binding site" evidence="1">
    <location>
        <position position="38"/>
    </location>
    <ligand>
        <name>Zn(2+)</name>
        <dbReference type="ChEBI" id="CHEBI:29105"/>
        <label>1</label>
        <note>catalytic</note>
    </ligand>
</feature>
<feature type="binding site" evidence="1">
    <location>
        <position position="63"/>
    </location>
    <ligand>
        <name>Zn(2+)</name>
        <dbReference type="ChEBI" id="CHEBI:29105"/>
        <label>1</label>
        <note>catalytic</note>
    </ligand>
</feature>
<feature type="binding site" evidence="1">
    <location>
        <position position="64"/>
    </location>
    <ligand>
        <name>Zn(2+)</name>
        <dbReference type="ChEBI" id="CHEBI:29105"/>
        <label>1</label>
        <note>catalytic</note>
    </ligand>
</feature>
<feature type="binding site" evidence="1">
    <location>
        <position position="93"/>
    </location>
    <ligand>
        <name>Zn(2+)</name>
        <dbReference type="ChEBI" id="CHEBI:29105"/>
        <label>2</label>
    </ligand>
</feature>
<feature type="binding site" evidence="1">
    <location>
        <position position="96"/>
    </location>
    <ligand>
        <name>Zn(2+)</name>
        <dbReference type="ChEBI" id="CHEBI:29105"/>
        <label>2</label>
    </ligand>
</feature>
<feature type="binding site" evidence="1">
    <location>
        <position position="99"/>
    </location>
    <ligand>
        <name>Zn(2+)</name>
        <dbReference type="ChEBI" id="CHEBI:29105"/>
        <label>2</label>
    </ligand>
</feature>
<feature type="binding site" evidence="1">
    <location>
        <position position="107"/>
    </location>
    <ligand>
        <name>Zn(2+)</name>
        <dbReference type="ChEBI" id="CHEBI:29105"/>
        <label>2</label>
    </ligand>
</feature>
<feature type="binding site" evidence="1">
    <location>
        <position position="175"/>
    </location>
    <ligand>
        <name>NAD(+)</name>
        <dbReference type="ChEBI" id="CHEBI:57540"/>
    </ligand>
</feature>
<feature type="binding site" evidence="1">
    <location>
        <position position="195"/>
    </location>
    <ligand>
        <name>NAD(+)</name>
        <dbReference type="ChEBI" id="CHEBI:57540"/>
    </ligand>
</feature>
<feature type="binding site" evidence="1">
    <location>
        <position position="200"/>
    </location>
    <ligand>
        <name>NAD(+)</name>
        <dbReference type="ChEBI" id="CHEBI:57540"/>
    </ligand>
</feature>
<feature type="binding site" evidence="1">
    <location>
        <begin position="262"/>
        <end position="264"/>
    </location>
    <ligand>
        <name>NAD(+)</name>
        <dbReference type="ChEBI" id="CHEBI:57540"/>
    </ligand>
</feature>
<feature type="binding site" evidence="1">
    <location>
        <begin position="286"/>
        <end position="287"/>
    </location>
    <ligand>
        <name>NAD(+)</name>
        <dbReference type="ChEBI" id="CHEBI:57540"/>
    </ligand>
</feature>
<feature type="site" description="Important for catalytic activity for the proton relay mechanism but does not participate directly in the coordination of zinc atom" evidence="1">
    <location>
        <position position="148"/>
    </location>
</feature>
<gene>
    <name evidence="1" type="primary">tdh</name>
    <name type="ordered locus">ECED1_4302</name>
</gene>